<protein>
    <recommendedName>
        <fullName evidence="1">Large ribosomal subunit protein uL10</fullName>
    </recommendedName>
    <alternativeName>
        <fullName evidence="2">50S ribosomal protein L10</fullName>
    </alternativeName>
</protein>
<accession>B7I358</accession>
<sequence length="168" mass="18090">MALLIEDKKQIVAEVSEVASKAFAAVVADYQGLSVEQLTTLRVEARKLGVTTRIVRNTLAKRAFQGTQFDILNDNLVGPTILGFSTSEDDMGAAARLFEEFAKTNKAFELKAAAFDGKVYQGADVSVIANLPNQEKALTMLASVLQAPISKLGRLITALKEKNESEAA</sequence>
<organism>
    <name type="scientific">Acinetobacter baumannii (strain AB0057)</name>
    <dbReference type="NCBI Taxonomy" id="480119"/>
    <lineage>
        <taxon>Bacteria</taxon>
        <taxon>Pseudomonadati</taxon>
        <taxon>Pseudomonadota</taxon>
        <taxon>Gammaproteobacteria</taxon>
        <taxon>Moraxellales</taxon>
        <taxon>Moraxellaceae</taxon>
        <taxon>Acinetobacter</taxon>
        <taxon>Acinetobacter calcoaceticus/baumannii complex</taxon>
    </lineage>
</organism>
<comment type="function">
    <text evidence="1">Forms part of the ribosomal stalk, playing a central role in the interaction of the ribosome with GTP-bound translation factors.</text>
</comment>
<comment type="subunit">
    <text evidence="1">Part of the ribosomal stalk of the 50S ribosomal subunit. The N-terminus interacts with L11 and the large rRNA to form the base of the stalk. The C-terminus forms an elongated spine to which L12 dimers bind in a sequential fashion forming a multimeric L10(L12)X complex.</text>
</comment>
<comment type="similarity">
    <text evidence="1">Belongs to the universal ribosomal protein uL10 family.</text>
</comment>
<feature type="chain" id="PRO_1000120900" description="Large ribosomal subunit protein uL10">
    <location>
        <begin position="1"/>
        <end position="168"/>
    </location>
</feature>
<reference key="1">
    <citation type="journal article" date="2008" name="J. Bacteriol.">
        <title>Comparative genome sequence analysis of multidrug-resistant Acinetobacter baumannii.</title>
        <authorList>
            <person name="Adams M.D."/>
            <person name="Goglin K."/>
            <person name="Molyneaux N."/>
            <person name="Hujer K.M."/>
            <person name="Lavender H."/>
            <person name="Jamison J.J."/>
            <person name="MacDonald I.J."/>
            <person name="Martin K.M."/>
            <person name="Russo T."/>
            <person name="Campagnari A.A."/>
            <person name="Hujer A.M."/>
            <person name="Bonomo R.A."/>
            <person name="Gill S.R."/>
        </authorList>
    </citation>
    <scope>NUCLEOTIDE SEQUENCE [LARGE SCALE GENOMIC DNA]</scope>
    <source>
        <strain>AB0057</strain>
    </source>
</reference>
<proteinExistence type="inferred from homology"/>
<evidence type="ECO:0000255" key="1">
    <source>
        <dbReference type="HAMAP-Rule" id="MF_00362"/>
    </source>
</evidence>
<evidence type="ECO:0000305" key="2"/>
<keyword id="KW-0687">Ribonucleoprotein</keyword>
<keyword id="KW-0689">Ribosomal protein</keyword>
<keyword id="KW-0694">RNA-binding</keyword>
<keyword id="KW-0699">rRNA-binding</keyword>
<dbReference type="EMBL" id="CP001182">
    <property type="protein sequence ID" value="ACJ39793.1"/>
    <property type="molecule type" value="Genomic_DNA"/>
</dbReference>
<dbReference type="RefSeq" id="WP_001196213.1">
    <property type="nucleotide sequence ID" value="NC_011586.2"/>
</dbReference>
<dbReference type="SMR" id="B7I358"/>
<dbReference type="GeneID" id="92892282"/>
<dbReference type="KEGG" id="abn:AB57_0367"/>
<dbReference type="HOGENOM" id="CLU_092227_0_2_6"/>
<dbReference type="Proteomes" id="UP000007094">
    <property type="component" value="Chromosome"/>
</dbReference>
<dbReference type="GO" id="GO:0015934">
    <property type="term" value="C:large ribosomal subunit"/>
    <property type="evidence" value="ECO:0007669"/>
    <property type="project" value="InterPro"/>
</dbReference>
<dbReference type="GO" id="GO:0070180">
    <property type="term" value="F:large ribosomal subunit rRNA binding"/>
    <property type="evidence" value="ECO:0007669"/>
    <property type="project" value="UniProtKB-UniRule"/>
</dbReference>
<dbReference type="GO" id="GO:0003735">
    <property type="term" value="F:structural constituent of ribosome"/>
    <property type="evidence" value="ECO:0007669"/>
    <property type="project" value="InterPro"/>
</dbReference>
<dbReference type="GO" id="GO:0006412">
    <property type="term" value="P:translation"/>
    <property type="evidence" value="ECO:0007669"/>
    <property type="project" value="UniProtKB-UniRule"/>
</dbReference>
<dbReference type="CDD" id="cd05797">
    <property type="entry name" value="Ribosomal_L10"/>
    <property type="match status" value="1"/>
</dbReference>
<dbReference type="Gene3D" id="3.30.70.1730">
    <property type="match status" value="1"/>
</dbReference>
<dbReference type="HAMAP" id="MF_00362">
    <property type="entry name" value="Ribosomal_uL10"/>
    <property type="match status" value="1"/>
</dbReference>
<dbReference type="InterPro" id="IPR001790">
    <property type="entry name" value="Ribosomal_uL10"/>
</dbReference>
<dbReference type="InterPro" id="IPR043141">
    <property type="entry name" value="Ribosomal_uL10-like_sf"/>
</dbReference>
<dbReference type="InterPro" id="IPR022973">
    <property type="entry name" value="Ribosomal_uL10_bac"/>
</dbReference>
<dbReference type="InterPro" id="IPR047865">
    <property type="entry name" value="Ribosomal_uL10_bac_type"/>
</dbReference>
<dbReference type="InterPro" id="IPR002363">
    <property type="entry name" value="Ribosomal_uL10_CS_bac"/>
</dbReference>
<dbReference type="NCBIfam" id="NF000955">
    <property type="entry name" value="PRK00099.1-1"/>
    <property type="match status" value="1"/>
</dbReference>
<dbReference type="PANTHER" id="PTHR11560">
    <property type="entry name" value="39S RIBOSOMAL PROTEIN L10, MITOCHONDRIAL"/>
    <property type="match status" value="1"/>
</dbReference>
<dbReference type="Pfam" id="PF00466">
    <property type="entry name" value="Ribosomal_L10"/>
    <property type="match status" value="1"/>
</dbReference>
<dbReference type="SUPFAM" id="SSF160369">
    <property type="entry name" value="Ribosomal protein L10-like"/>
    <property type="match status" value="1"/>
</dbReference>
<dbReference type="PROSITE" id="PS01109">
    <property type="entry name" value="RIBOSOMAL_L10"/>
    <property type="match status" value="1"/>
</dbReference>
<name>RL10_ACIB5</name>
<gene>
    <name evidence="1" type="primary">rplJ</name>
    <name type="ordered locus">AB57_0367</name>
</gene>